<protein>
    <recommendedName>
        <fullName evidence="1">NH(3)-dependent NAD(+) synthetase</fullName>
        <ecNumber evidence="1">6.3.1.5</ecNumber>
    </recommendedName>
</protein>
<feature type="chain" id="PRO_1000077547" description="NH(3)-dependent NAD(+) synthetase">
    <location>
        <begin position="1"/>
        <end position="277"/>
    </location>
</feature>
<feature type="binding site" evidence="1">
    <location>
        <begin position="46"/>
        <end position="53"/>
    </location>
    <ligand>
        <name>ATP</name>
        <dbReference type="ChEBI" id="CHEBI:30616"/>
    </ligand>
</feature>
<feature type="binding site" evidence="1">
    <location>
        <position position="52"/>
    </location>
    <ligand>
        <name>Mg(2+)</name>
        <dbReference type="ChEBI" id="CHEBI:18420"/>
    </ligand>
</feature>
<feature type="binding site" evidence="1">
    <location>
        <position position="142"/>
    </location>
    <ligand>
        <name>deamido-NAD(+)</name>
        <dbReference type="ChEBI" id="CHEBI:58437"/>
    </ligand>
</feature>
<feature type="binding site" evidence="1">
    <location>
        <position position="162"/>
    </location>
    <ligand>
        <name>ATP</name>
        <dbReference type="ChEBI" id="CHEBI:30616"/>
    </ligand>
</feature>
<feature type="binding site" evidence="1">
    <location>
        <position position="167"/>
    </location>
    <ligand>
        <name>Mg(2+)</name>
        <dbReference type="ChEBI" id="CHEBI:18420"/>
    </ligand>
</feature>
<feature type="binding site" evidence="1">
    <location>
        <position position="175"/>
    </location>
    <ligand>
        <name>deamido-NAD(+)</name>
        <dbReference type="ChEBI" id="CHEBI:58437"/>
    </ligand>
</feature>
<feature type="binding site" evidence="1">
    <location>
        <position position="182"/>
    </location>
    <ligand>
        <name>deamido-NAD(+)</name>
        <dbReference type="ChEBI" id="CHEBI:58437"/>
    </ligand>
</feature>
<feature type="binding site" evidence="1">
    <location>
        <position position="191"/>
    </location>
    <ligand>
        <name>ATP</name>
        <dbReference type="ChEBI" id="CHEBI:30616"/>
    </ligand>
</feature>
<feature type="binding site" evidence="1">
    <location>
        <position position="213"/>
    </location>
    <ligand>
        <name>ATP</name>
        <dbReference type="ChEBI" id="CHEBI:30616"/>
    </ligand>
</feature>
<feature type="binding site" evidence="1">
    <location>
        <begin position="263"/>
        <end position="264"/>
    </location>
    <ligand>
        <name>deamido-NAD(+)</name>
        <dbReference type="ChEBI" id="CHEBI:58437"/>
    </ligand>
</feature>
<gene>
    <name evidence="1" type="primary">nadE</name>
    <name type="ordered locus">cgR_2441</name>
</gene>
<evidence type="ECO:0000255" key="1">
    <source>
        <dbReference type="HAMAP-Rule" id="MF_00193"/>
    </source>
</evidence>
<sequence length="277" mass="30388">MTNTQTEIINELKVSPAIDVAKEVEFRVQFLVDYLRASHAKGFVLGISGGQDSTLAGRLAQLAVERIRAEENSTDYVFYAVRLPYAIQADEDDAQVALEFIAPDKSVTVNVKDATDATEATVAAALELPELTDFNRGNIKARQRMVAQYAIAGQYGLLVIGTDHAAENVTGFFTKFGDGAADLLPLAGLSKRQGAAILEHLGAPSSTWTKIPTADLEEDRPALPDEEALGVSYADIDNYLENKPDVSEGAQQRIEHLWKVGQHKRHLPVTPQEDWWR</sequence>
<name>NADE_CORGB</name>
<accession>A4QGT5</accession>
<comment type="function">
    <text evidence="1">Catalyzes the ATP-dependent amidation of deamido-NAD to form NAD. Uses ammonia as a nitrogen source.</text>
</comment>
<comment type="catalytic activity">
    <reaction evidence="1">
        <text>deamido-NAD(+) + NH4(+) + ATP = AMP + diphosphate + NAD(+) + H(+)</text>
        <dbReference type="Rhea" id="RHEA:21188"/>
        <dbReference type="ChEBI" id="CHEBI:15378"/>
        <dbReference type="ChEBI" id="CHEBI:28938"/>
        <dbReference type="ChEBI" id="CHEBI:30616"/>
        <dbReference type="ChEBI" id="CHEBI:33019"/>
        <dbReference type="ChEBI" id="CHEBI:57540"/>
        <dbReference type="ChEBI" id="CHEBI:58437"/>
        <dbReference type="ChEBI" id="CHEBI:456215"/>
        <dbReference type="EC" id="6.3.1.5"/>
    </reaction>
</comment>
<comment type="pathway">
    <text evidence="1">Cofactor biosynthesis; NAD(+) biosynthesis; NAD(+) from deamido-NAD(+) (ammonia route): step 1/1.</text>
</comment>
<comment type="subunit">
    <text evidence="1">Homodimer.</text>
</comment>
<comment type="similarity">
    <text evidence="1">Belongs to the NAD synthetase family.</text>
</comment>
<organism>
    <name type="scientific">Corynebacterium glutamicum (strain R)</name>
    <dbReference type="NCBI Taxonomy" id="340322"/>
    <lineage>
        <taxon>Bacteria</taxon>
        <taxon>Bacillati</taxon>
        <taxon>Actinomycetota</taxon>
        <taxon>Actinomycetes</taxon>
        <taxon>Mycobacteriales</taxon>
        <taxon>Corynebacteriaceae</taxon>
        <taxon>Corynebacterium</taxon>
    </lineage>
</organism>
<proteinExistence type="inferred from homology"/>
<keyword id="KW-0067">ATP-binding</keyword>
<keyword id="KW-0436">Ligase</keyword>
<keyword id="KW-0460">Magnesium</keyword>
<keyword id="KW-0479">Metal-binding</keyword>
<keyword id="KW-0520">NAD</keyword>
<keyword id="KW-0547">Nucleotide-binding</keyword>
<reference key="1">
    <citation type="journal article" date="2007" name="Microbiology">
        <title>Comparative analysis of the Corynebacterium glutamicum group and complete genome sequence of strain R.</title>
        <authorList>
            <person name="Yukawa H."/>
            <person name="Omumasaba C.A."/>
            <person name="Nonaka H."/>
            <person name="Kos P."/>
            <person name="Okai N."/>
            <person name="Suzuki N."/>
            <person name="Suda M."/>
            <person name="Tsuge Y."/>
            <person name="Watanabe J."/>
            <person name="Ikeda Y."/>
            <person name="Vertes A.A."/>
            <person name="Inui M."/>
        </authorList>
    </citation>
    <scope>NUCLEOTIDE SEQUENCE [LARGE SCALE GENOMIC DNA]</scope>
    <source>
        <strain>R</strain>
    </source>
</reference>
<dbReference type="EC" id="6.3.1.5" evidence="1"/>
<dbReference type="EMBL" id="AP009044">
    <property type="protein sequence ID" value="BAF55451.1"/>
    <property type="molecule type" value="Genomic_DNA"/>
</dbReference>
<dbReference type="RefSeq" id="WP_011897816.1">
    <property type="nucleotide sequence ID" value="NC_009342.1"/>
</dbReference>
<dbReference type="SMR" id="A4QGT5"/>
<dbReference type="KEGG" id="cgt:cgR_2441"/>
<dbReference type="HOGENOM" id="CLU_059327_3_0_11"/>
<dbReference type="PhylomeDB" id="A4QGT5"/>
<dbReference type="UniPathway" id="UPA00253">
    <property type="reaction ID" value="UER00333"/>
</dbReference>
<dbReference type="Proteomes" id="UP000006698">
    <property type="component" value="Chromosome"/>
</dbReference>
<dbReference type="GO" id="GO:0005737">
    <property type="term" value="C:cytoplasm"/>
    <property type="evidence" value="ECO:0007669"/>
    <property type="project" value="InterPro"/>
</dbReference>
<dbReference type="GO" id="GO:0005524">
    <property type="term" value="F:ATP binding"/>
    <property type="evidence" value="ECO:0007669"/>
    <property type="project" value="UniProtKB-UniRule"/>
</dbReference>
<dbReference type="GO" id="GO:0004359">
    <property type="term" value="F:glutaminase activity"/>
    <property type="evidence" value="ECO:0007669"/>
    <property type="project" value="InterPro"/>
</dbReference>
<dbReference type="GO" id="GO:0046872">
    <property type="term" value="F:metal ion binding"/>
    <property type="evidence" value="ECO:0007669"/>
    <property type="project" value="UniProtKB-KW"/>
</dbReference>
<dbReference type="GO" id="GO:0003952">
    <property type="term" value="F:NAD+ synthase (glutamine-hydrolyzing) activity"/>
    <property type="evidence" value="ECO:0007669"/>
    <property type="project" value="InterPro"/>
</dbReference>
<dbReference type="GO" id="GO:0008795">
    <property type="term" value="F:NAD+ synthase activity"/>
    <property type="evidence" value="ECO:0007669"/>
    <property type="project" value="UniProtKB-UniRule"/>
</dbReference>
<dbReference type="GO" id="GO:0009435">
    <property type="term" value="P:NAD biosynthetic process"/>
    <property type="evidence" value="ECO:0007669"/>
    <property type="project" value="UniProtKB-UniRule"/>
</dbReference>
<dbReference type="CDD" id="cd00553">
    <property type="entry name" value="NAD_synthase"/>
    <property type="match status" value="1"/>
</dbReference>
<dbReference type="FunFam" id="3.40.50.620:FF:000015">
    <property type="entry name" value="NH(3)-dependent NAD(+) synthetase"/>
    <property type="match status" value="1"/>
</dbReference>
<dbReference type="Gene3D" id="3.40.50.620">
    <property type="entry name" value="HUPs"/>
    <property type="match status" value="1"/>
</dbReference>
<dbReference type="HAMAP" id="MF_00193">
    <property type="entry name" value="NadE_ammonia_dep"/>
    <property type="match status" value="1"/>
</dbReference>
<dbReference type="InterPro" id="IPR022310">
    <property type="entry name" value="NAD/GMP_synthase"/>
</dbReference>
<dbReference type="InterPro" id="IPR003694">
    <property type="entry name" value="NAD_synthase"/>
</dbReference>
<dbReference type="InterPro" id="IPR022926">
    <property type="entry name" value="NH(3)-dep_NAD(+)_synth"/>
</dbReference>
<dbReference type="InterPro" id="IPR014729">
    <property type="entry name" value="Rossmann-like_a/b/a_fold"/>
</dbReference>
<dbReference type="NCBIfam" id="TIGR00552">
    <property type="entry name" value="nadE"/>
    <property type="match status" value="1"/>
</dbReference>
<dbReference type="NCBIfam" id="NF001979">
    <property type="entry name" value="PRK00768.1"/>
    <property type="match status" value="1"/>
</dbReference>
<dbReference type="PANTHER" id="PTHR23090">
    <property type="entry name" value="NH 3 /GLUTAMINE-DEPENDENT NAD + SYNTHETASE"/>
    <property type="match status" value="1"/>
</dbReference>
<dbReference type="PANTHER" id="PTHR23090:SF7">
    <property type="entry name" value="NH(3)-DEPENDENT NAD(+) SYNTHETASE"/>
    <property type="match status" value="1"/>
</dbReference>
<dbReference type="Pfam" id="PF02540">
    <property type="entry name" value="NAD_synthase"/>
    <property type="match status" value="1"/>
</dbReference>
<dbReference type="SUPFAM" id="SSF52402">
    <property type="entry name" value="Adenine nucleotide alpha hydrolases-like"/>
    <property type="match status" value="1"/>
</dbReference>